<accession>Q6ENQ9</accession>
<reference key="1">
    <citation type="journal article" date="2004" name="DNA Res.">
        <title>Complete nucleotide sequence of the sugarcane (Saccharum officinarum) chloroplast genome: a comparative analysis of four monocot chloroplast genomes.</title>
        <authorList>
            <person name="Asano T."/>
            <person name="Tsudzuki T."/>
            <person name="Takahashi S."/>
            <person name="Shimada H."/>
            <person name="Kadowaki K."/>
        </authorList>
    </citation>
    <scope>NUCLEOTIDE SEQUENCE [LARGE SCALE GENOMIC DNA]</scope>
</reference>
<keyword id="KW-0150">Chloroplast</keyword>
<keyword id="KW-0934">Plastid</keyword>
<keyword id="KW-0687">Ribonucleoprotein</keyword>
<keyword id="KW-0689">Ribosomal protein</keyword>
<keyword id="KW-0694">RNA-binding</keyword>
<keyword id="KW-0699">rRNA-binding</keyword>
<comment type="function">
    <text evidence="1">One of the primary rRNA binding proteins, it binds directly to 16S rRNA where it nucleates assembly of the head domain of the 30S subunit.</text>
</comment>
<comment type="subunit">
    <text>Part of the 30S ribosomal subunit.</text>
</comment>
<comment type="subcellular location">
    <subcellularLocation>
        <location>Plastid</location>
        <location>Chloroplast</location>
    </subcellularLocation>
</comment>
<comment type="similarity">
    <text evidence="3">Belongs to the universal ribosomal protein uS7 family.</text>
</comment>
<sequence>MSRRGTAEKRTAKSDPIFRNRLVNMVVNRIMKDGKKSLAYQILYRAVKKIQQKTETNPLLVLRQAIRRVTPNIGVKTRRNKKGSTRKVPIEIGSKQGRALAIRWLLEASQKRPGRNMAFKLSSELVDAAKGSGGAIRKKEATHRMAEANRALAHFR</sequence>
<dbReference type="EMBL" id="AP006714">
    <property type="protein sequence ID" value="BAD27347.1"/>
    <property type="molecule type" value="Genomic_DNA"/>
</dbReference>
<dbReference type="EMBL" id="AP006714">
    <property type="protein sequence ID" value="BAD27373.1"/>
    <property type="molecule type" value="Genomic_DNA"/>
</dbReference>
<dbReference type="SMR" id="Q6ENQ9"/>
<dbReference type="GO" id="GO:0009507">
    <property type="term" value="C:chloroplast"/>
    <property type="evidence" value="ECO:0007669"/>
    <property type="project" value="UniProtKB-SubCell"/>
</dbReference>
<dbReference type="GO" id="GO:0015935">
    <property type="term" value="C:small ribosomal subunit"/>
    <property type="evidence" value="ECO:0007669"/>
    <property type="project" value="InterPro"/>
</dbReference>
<dbReference type="GO" id="GO:0019843">
    <property type="term" value="F:rRNA binding"/>
    <property type="evidence" value="ECO:0007669"/>
    <property type="project" value="UniProtKB-UniRule"/>
</dbReference>
<dbReference type="GO" id="GO:0003735">
    <property type="term" value="F:structural constituent of ribosome"/>
    <property type="evidence" value="ECO:0007669"/>
    <property type="project" value="InterPro"/>
</dbReference>
<dbReference type="GO" id="GO:0006412">
    <property type="term" value="P:translation"/>
    <property type="evidence" value="ECO:0007669"/>
    <property type="project" value="UniProtKB-UniRule"/>
</dbReference>
<dbReference type="CDD" id="cd14871">
    <property type="entry name" value="uS7_Chloroplast"/>
    <property type="match status" value="1"/>
</dbReference>
<dbReference type="FunFam" id="1.10.455.10:FF:000001">
    <property type="entry name" value="30S ribosomal protein S7"/>
    <property type="match status" value="1"/>
</dbReference>
<dbReference type="Gene3D" id="1.10.455.10">
    <property type="entry name" value="Ribosomal protein S7 domain"/>
    <property type="match status" value="1"/>
</dbReference>
<dbReference type="HAMAP" id="MF_00480_B">
    <property type="entry name" value="Ribosomal_uS7_B"/>
    <property type="match status" value="1"/>
</dbReference>
<dbReference type="InterPro" id="IPR000235">
    <property type="entry name" value="Ribosomal_uS7"/>
</dbReference>
<dbReference type="InterPro" id="IPR005717">
    <property type="entry name" value="Ribosomal_uS7_bac/org-type"/>
</dbReference>
<dbReference type="InterPro" id="IPR020606">
    <property type="entry name" value="Ribosomal_uS7_CS"/>
</dbReference>
<dbReference type="InterPro" id="IPR023798">
    <property type="entry name" value="Ribosomal_uS7_dom"/>
</dbReference>
<dbReference type="InterPro" id="IPR036823">
    <property type="entry name" value="Ribosomal_uS7_dom_sf"/>
</dbReference>
<dbReference type="NCBIfam" id="TIGR01029">
    <property type="entry name" value="rpsG_bact"/>
    <property type="match status" value="1"/>
</dbReference>
<dbReference type="PANTHER" id="PTHR11205">
    <property type="entry name" value="RIBOSOMAL PROTEIN S7"/>
    <property type="match status" value="1"/>
</dbReference>
<dbReference type="Pfam" id="PF00177">
    <property type="entry name" value="Ribosomal_S7"/>
    <property type="match status" value="1"/>
</dbReference>
<dbReference type="PIRSF" id="PIRSF002122">
    <property type="entry name" value="RPS7p_RPS7a_RPS5e_RPS7o"/>
    <property type="match status" value="1"/>
</dbReference>
<dbReference type="SUPFAM" id="SSF47973">
    <property type="entry name" value="Ribosomal protein S7"/>
    <property type="match status" value="1"/>
</dbReference>
<dbReference type="PROSITE" id="PS00052">
    <property type="entry name" value="RIBOSOMAL_S7"/>
    <property type="match status" value="1"/>
</dbReference>
<proteinExistence type="inferred from homology"/>
<protein>
    <recommendedName>
        <fullName evidence="2">Small ribosomal subunit protein uS7cz/uS7cy</fullName>
    </recommendedName>
    <alternativeName>
        <fullName>30S ribosomal protein S7, chloroplastic</fullName>
    </alternativeName>
</protein>
<gene>
    <name type="primary">rps7-A</name>
</gene>
<gene>
    <name type="primary">rps7-B</name>
</gene>
<feature type="chain" id="PRO_0000124497" description="Small ribosomal subunit protein uS7cz/uS7cy">
    <location>
        <begin position="1"/>
        <end position="156"/>
    </location>
</feature>
<evidence type="ECO:0000250" key="1"/>
<evidence type="ECO:0000255" key="2">
    <source>
        <dbReference type="HAMAP-Rule" id="MF_00480"/>
    </source>
</evidence>
<evidence type="ECO:0000305" key="3"/>
<name>RR7_SACOF</name>
<geneLocation type="chloroplast"/>
<organism>
    <name type="scientific">Saccharum officinarum</name>
    <name type="common">Sugarcane</name>
    <dbReference type="NCBI Taxonomy" id="4547"/>
    <lineage>
        <taxon>Eukaryota</taxon>
        <taxon>Viridiplantae</taxon>
        <taxon>Streptophyta</taxon>
        <taxon>Embryophyta</taxon>
        <taxon>Tracheophyta</taxon>
        <taxon>Spermatophyta</taxon>
        <taxon>Magnoliopsida</taxon>
        <taxon>Liliopsida</taxon>
        <taxon>Poales</taxon>
        <taxon>Poaceae</taxon>
        <taxon>PACMAD clade</taxon>
        <taxon>Panicoideae</taxon>
        <taxon>Andropogonodae</taxon>
        <taxon>Andropogoneae</taxon>
        <taxon>Saccharinae</taxon>
        <taxon>Saccharum</taxon>
        <taxon>Saccharum officinarum species complex</taxon>
    </lineage>
</organism>